<proteinExistence type="evidence at protein level"/>
<organism>
    <name type="scientific">Solanum tuberosum</name>
    <name type="common">Potato</name>
    <dbReference type="NCBI Taxonomy" id="4113"/>
    <lineage>
        <taxon>Eukaryota</taxon>
        <taxon>Viridiplantae</taxon>
        <taxon>Streptophyta</taxon>
        <taxon>Embryophyta</taxon>
        <taxon>Tracheophyta</taxon>
        <taxon>Spermatophyta</taxon>
        <taxon>Magnoliopsida</taxon>
        <taxon>eudicotyledons</taxon>
        <taxon>Gunneridae</taxon>
        <taxon>Pentapetalae</taxon>
        <taxon>asterids</taxon>
        <taxon>lamiids</taxon>
        <taxon>Solanales</taxon>
        <taxon>Solanaceae</taxon>
        <taxon>Solanoideae</taxon>
        <taxon>Solaneae</taxon>
        <taxon>Solanum</taxon>
    </lineage>
</organism>
<gene>
    <name type="primary">TOM7-2</name>
</gene>
<feature type="chain" id="PRO_0000046765" description="Mitochondrial import receptor subunit TOM7-2">
    <location>
        <begin position="1"/>
        <end position="26" status="greater than"/>
    </location>
</feature>
<feature type="non-terminal residue">
    <location>
        <position position="26"/>
    </location>
</feature>
<protein>
    <recommendedName>
        <fullName>Mitochondrial import receptor subunit TOM7-2</fullName>
    </recommendedName>
    <alternativeName>
        <fullName>Translocase of outer membrane 7 kDa subunit 2</fullName>
    </alternativeName>
</protein>
<keyword id="KW-0903">Direct protein sequencing</keyword>
<keyword id="KW-0472">Membrane</keyword>
<keyword id="KW-0496">Mitochondrion</keyword>
<keyword id="KW-1000">Mitochondrion outer membrane</keyword>
<keyword id="KW-0653">Protein transport</keyword>
<keyword id="KW-1185">Reference proteome</keyword>
<keyword id="KW-0812">Transmembrane</keyword>
<keyword id="KW-0813">Transport</keyword>
<accession>P81794</accession>
<reference key="1">
    <citation type="journal article" date="1998" name="J. Biol. Chem.">
        <title>Unique composition of the preprotein translocase of the outer mitochondrial membrane from plants.</title>
        <authorList>
            <person name="Jaensch L."/>
            <person name="Kruft V."/>
            <person name="Schmitz U.K."/>
            <person name="Braun H.-P."/>
        </authorList>
    </citation>
    <scope>PROTEIN SEQUENCE</scope>
    <source>
        <tissue>Tuber</tissue>
    </source>
</reference>
<sequence length="26" mass="2724">AKGKNTKKFAAVVDEEGGAVTAXYXF</sequence>
<name>TOM7B_SOLTU</name>
<dbReference type="InParanoid" id="P81794"/>
<dbReference type="Proteomes" id="UP000011115">
    <property type="component" value="Unassembled WGS sequence"/>
</dbReference>
<dbReference type="GO" id="GO:0005741">
    <property type="term" value="C:mitochondrial outer membrane"/>
    <property type="evidence" value="ECO:0007669"/>
    <property type="project" value="UniProtKB-SubCell"/>
</dbReference>
<dbReference type="GO" id="GO:0015031">
    <property type="term" value="P:protein transport"/>
    <property type="evidence" value="ECO:0007669"/>
    <property type="project" value="UniProtKB-KW"/>
</dbReference>
<comment type="function">
    <text evidence="1">Seems to act as a modulator of the dynamics of the mitochondrial protein transport machinery. Seems to promote the dissociation of subunits of the outer membrane translocase (By similarity).</text>
</comment>
<comment type="subunit">
    <text>Forms part of the preprotein translocase complex of the outer mitochondrial membrane (TOM complex).</text>
</comment>
<comment type="subcellular location">
    <subcellularLocation>
        <location>Mitochondrion outer membrane</location>
        <topology>Single-pass membrane protein</topology>
    </subcellularLocation>
</comment>
<comment type="similarity">
    <text evidence="2">Belongs to the Tom7 family.</text>
</comment>
<evidence type="ECO:0000250" key="1"/>
<evidence type="ECO:0000305" key="2"/>